<dbReference type="EMBL" id="DS480463">
    <property type="protein sequence ID" value="EDO15387.1"/>
    <property type="molecule type" value="Genomic_DNA"/>
</dbReference>
<dbReference type="RefSeq" id="XP_001643245.1">
    <property type="nucleotide sequence ID" value="XM_001643195.1"/>
</dbReference>
<dbReference type="SMR" id="A7TQT8"/>
<dbReference type="FunCoup" id="A7TQT8">
    <property type="interactions" value="1096"/>
</dbReference>
<dbReference type="STRING" id="436907.A7TQT8"/>
<dbReference type="GeneID" id="5543458"/>
<dbReference type="KEGG" id="vpo:Kpol_460p22"/>
<dbReference type="eggNOG" id="KOG1839">
    <property type="taxonomic scope" value="Eukaryota"/>
</dbReference>
<dbReference type="HOGENOM" id="CLU_003256_2_0_1"/>
<dbReference type="InParanoid" id="A7TQT8"/>
<dbReference type="OMA" id="HPVWDKD"/>
<dbReference type="OrthoDB" id="1414216at2759"/>
<dbReference type="PhylomeDB" id="A7TQT8"/>
<dbReference type="Proteomes" id="UP000000267">
    <property type="component" value="Unassembled WGS sequence"/>
</dbReference>
<dbReference type="GO" id="GO:0005737">
    <property type="term" value="C:cytoplasm"/>
    <property type="evidence" value="ECO:0007669"/>
    <property type="project" value="UniProtKB-SubCell"/>
</dbReference>
<dbReference type="GO" id="GO:0003729">
    <property type="term" value="F:mRNA binding"/>
    <property type="evidence" value="ECO:0007669"/>
    <property type="project" value="TreeGrafter"/>
</dbReference>
<dbReference type="GO" id="GO:0048312">
    <property type="term" value="P:intracellular distribution of mitochondria"/>
    <property type="evidence" value="ECO:0007669"/>
    <property type="project" value="TreeGrafter"/>
</dbReference>
<dbReference type="GO" id="GO:0007005">
    <property type="term" value="P:mitochondrion organization"/>
    <property type="evidence" value="ECO:0007669"/>
    <property type="project" value="UniProtKB-UniRule"/>
</dbReference>
<dbReference type="CDD" id="cd15466">
    <property type="entry name" value="CLU-central"/>
    <property type="match status" value="1"/>
</dbReference>
<dbReference type="Gene3D" id="1.25.40.10">
    <property type="entry name" value="Tetratricopeptide repeat domain"/>
    <property type="match status" value="1"/>
</dbReference>
<dbReference type="HAMAP" id="MF_03013">
    <property type="entry name" value="CLU"/>
    <property type="match status" value="1"/>
</dbReference>
<dbReference type="InterPro" id="IPR033646">
    <property type="entry name" value="CLU-central"/>
</dbReference>
<dbReference type="InterPro" id="IPR025697">
    <property type="entry name" value="CLU_dom"/>
</dbReference>
<dbReference type="InterPro" id="IPR028275">
    <property type="entry name" value="CLU_N"/>
</dbReference>
<dbReference type="InterPro" id="IPR027523">
    <property type="entry name" value="CLU_prot"/>
</dbReference>
<dbReference type="InterPro" id="IPR023231">
    <property type="entry name" value="GSKIP_dom_sf"/>
</dbReference>
<dbReference type="InterPro" id="IPR011990">
    <property type="entry name" value="TPR-like_helical_dom_sf"/>
</dbReference>
<dbReference type="PANTHER" id="PTHR12601:SF6">
    <property type="entry name" value="CLUSTERED MITOCHONDRIA PROTEIN HOMOLOG"/>
    <property type="match status" value="1"/>
</dbReference>
<dbReference type="PANTHER" id="PTHR12601">
    <property type="entry name" value="EUKARYOTIC TRANSLATION INITIATION FACTOR 3 SUBUNIT EIF-3"/>
    <property type="match status" value="1"/>
</dbReference>
<dbReference type="Pfam" id="PF13236">
    <property type="entry name" value="CLU"/>
    <property type="match status" value="1"/>
</dbReference>
<dbReference type="Pfam" id="PF15044">
    <property type="entry name" value="CLU_N"/>
    <property type="match status" value="1"/>
</dbReference>
<dbReference type="Pfam" id="PF12807">
    <property type="entry name" value="eIF3_p135"/>
    <property type="match status" value="1"/>
</dbReference>
<dbReference type="Pfam" id="PF13374">
    <property type="entry name" value="TPR_10"/>
    <property type="match status" value="1"/>
</dbReference>
<dbReference type="SUPFAM" id="SSF103107">
    <property type="entry name" value="Hypothetical protein c14orf129, hspc210"/>
    <property type="match status" value="1"/>
</dbReference>
<dbReference type="SUPFAM" id="SSF48452">
    <property type="entry name" value="TPR-like"/>
    <property type="match status" value="1"/>
</dbReference>
<dbReference type="PROSITE" id="PS51823">
    <property type="entry name" value="CLU"/>
    <property type="match status" value="1"/>
</dbReference>
<reference key="1">
    <citation type="journal article" date="2007" name="Proc. Natl. Acad. Sci. U.S.A.">
        <title>Independent sorting-out of thousands of duplicated gene pairs in two yeast species descended from a whole-genome duplication.</title>
        <authorList>
            <person name="Scannell D.R."/>
            <person name="Frank A.C."/>
            <person name="Conant G.C."/>
            <person name="Byrne K.P."/>
            <person name="Woolfit M."/>
            <person name="Wolfe K.H."/>
        </authorList>
    </citation>
    <scope>NUCLEOTIDE SEQUENCE [LARGE SCALE GENOMIC DNA]</scope>
    <source>
        <strain>ATCC 22028 / DSM 70294 / BCRC 21397 / CBS 2163 / NBRC 10782 / NRRL Y-8283 / UCD 57-17</strain>
    </source>
</reference>
<gene>
    <name evidence="1" type="primary">CLU1</name>
    <name evidence="1" type="synonym">TIF31</name>
    <name type="ORF">Kpol_460p22</name>
</gene>
<name>CLU_VANPO</name>
<organism>
    <name type="scientific">Vanderwaltozyma polyspora (strain ATCC 22028 / DSM 70294 / BCRC 21397 / CBS 2163 / NBRC 10782 / NRRL Y-8283 / UCD 57-17)</name>
    <name type="common">Kluyveromyces polysporus</name>
    <dbReference type="NCBI Taxonomy" id="436907"/>
    <lineage>
        <taxon>Eukaryota</taxon>
        <taxon>Fungi</taxon>
        <taxon>Dikarya</taxon>
        <taxon>Ascomycota</taxon>
        <taxon>Saccharomycotina</taxon>
        <taxon>Saccharomycetes</taxon>
        <taxon>Saccharomycetales</taxon>
        <taxon>Saccharomycetaceae</taxon>
        <taxon>Vanderwaltozyma</taxon>
    </lineage>
</organism>
<protein>
    <recommendedName>
        <fullName evidence="1">Clustered mitochondria protein homolog</fullName>
    </recommendedName>
    <alternativeName>
        <fullName evidence="1">Protein TIF31 homolog</fullName>
    </alternativeName>
</protein>
<feature type="chain" id="PRO_0000366416" description="Clustered mitochondria protein homolog">
    <location>
        <begin position="1"/>
        <end position="1273"/>
    </location>
</feature>
<feature type="domain" description="Clu" evidence="2">
    <location>
        <begin position="344"/>
        <end position="599"/>
    </location>
</feature>
<feature type="repeat" description="TPR 1">
    <location>
        <begin position="981"/>
        <end position="1013"/>
    </location>
</feature>
<feature type="repeat" description="TPR 2">
    <location>
        <begin position="1022"/>
        <end position="1055"/>
    </location>
</feature>
<feature type="repeat" description="TPR 3">
    <location>
        <begin position="1151"/>
        <end position="1184"/>
    </location>
</feature>
<feature type="region of interest" description="Disordered" evidence="3">
    <location>
        <begin position="1217"/>
        <end position="1242"/>
    </location>
</feature>
<feature type="region of interest" description="Disordered" evidence="3">
    <location>
        <begin position="1254"/>
        <end position="1273"/>
    </location>
</feature>
<feature type="compositionally biased region" description="Basic residues" evidence="3">
    <location>
        <begin position="1262"/>
        <end position="1273"/>
    </location>
</feature>
<evidence type="ECO:0000255" key="1">
    <source>
        <dbReference type="HAMAP-Rule" id="MF_03013"/>
    </source>
</evidence>
<evidence type="ECO:0000255" key="2">
    <source>
        <dbReference type="PROSITE-ProRule" id="PRU01167"/>
    </source>
</evidence>
<evidence type="ECO:0000256" key="3">
    <source>
        <dbReference type="SAM" id="MobiDB-lite"/>
    </source>
</evidence>
<keyword id="KW-0963">Cytoplasm</keyword>
<keyword id="KW-1185">Reference proteome</keyword>
<keyword id="KW-0677">Repeat</keyword>
<keyword id="KW-0802">TPR repeat</keyword>
<sequence>MSETGKNSTAELSAVKVTVKLPESIVHHRSHQKKQQSHNVKETNELSFQFPRETRVQTILDVLSYAQATKYLTNFKLKTVHQILNPEQSINEIINDEKSNHLNLSIELCPYNTREIVRHVLTLRDFIGFALETEDGISEFSISTGSKFSNIPFMDVKEKQEEIEEIPRDDNKNLPKKNVLKVSQEEKDNFSKEVHSILDSFKYSNSNLKSAYSTISNIVTPCLNSLNLSAFNPVPAFFKTKGHILYLHIVTLEGESFHVTAVPSGFYINKSSSNKFDPSMKDVEGITQQDSIKYNLYDLIALHSKKFHSHVEALEKKLAAYQSIEYVKPLTTFLHKPWLVSSLPANNADYSRMQLDSSQYESERNFNDEFQAIRELPTPTVQESIQSERLLSRISHEFTTAAVKGAMSIFYGEMLPLNPESDDQIFLRDNIFYSYVMDANGSYDGKGGNDAAFAASNQDLKTIQILKNLKMKDVYYLLTTIIDFGGKRILAQTPVPGLLSNMGADVITDADSGEQMIVDKKSEVSVVYGLDEESGKVLANDQFDKSVSEEFSKYLHLKSHDVEGSKISFSYQSKGILGSDKRNYIIDLANTYPLDVKFAKEHFDNAEESKRYPHRQTLLRPELVEKWWNSKVQAEGIEINKAYDEAKFTYNPDAYQVEGVEDVNIQDMSSYLVETVLPSVIEDYATGNVSVPYDGEHLVDTLHINGINVRYLGKLAILAKEKLQLQEEVHEKRLKEIEISNKDYEEWEASYLKKIEKMIIERQEKVNKLVQEGKEVPKELTEELKLNEDDIRKPTDDAPAVVNTDELLPLIKVTEIEIFARTMKHILRKYTKDLPVVAIPSMIAFVLNLLFGQKYNEVPKPESVDSFYDVDTYEFSKLTRDGLIKEIQLVSELRFRYELAADFVDQFSDAPFILIRSIARKSGIQFLNKDYFFTKDQFEEFKLSQDKKVRGKLVAPANTFTVSDLNMIPRIKDIDYSSVLSDQKWAEGSMLLNEDQNAALTLFAQAIAIKEEVNGVLHKDVAEKYLTLSTVYSKLGLTPEAVAFCRKSCAIYERVSGIDSFEMLRSLSNLALLEFANESPYNSALVFKRIVETLESLKITEKIHHPAALNAFNQLEQMSLGVENTKLTVELCKQFRSLIVSLDGNDTLAYATLESRIGNLYASINDFHNAMEHISKTPRIFTRELGTNHQITAQSRQWVNGLSNLMKDAQQKKKLAAEQASVNSGSRKKNVNQKADAPKAELAEKSVDELLDFIEGGSTEKSKKKSSKKKGKK</sequence>
<accession>A7TQT8</accession>
<comment type="function">
    <text evidence="1">mRNA-binding protein involved in proper cytoplasmic distribution of mitochondria.</text>
</comment>
<comment type="subunit">
    <text evidence="1">May associate with the eukaryotic translation initiation factor 3 (eIF-3) complex.</text>
</comment>
<comment type="subcellular location">
    <subcellularLocation>
        <location evidence="1">Cytoplasm</location>
    </subcellularLocation>
</comment>
<comment type="similarity">
    <text evidence="1">Belongs to the CLU family.</text>
</comment>
<proteinExistence type="inferred from homology"/>